<protein>
    <recommendedName>
        <fullName evidence="1">Cytochrome b6-f complex subunit 5</fullName>
    </recommendedName>
    <alternativeName>
        <fullName evidence="1">Cytochrome b6-f complex subunit PetG</fullName>
    </alternativeName>
    <alternativeName>
        <fullName evidence="1">Cytochrome b6-f complex subunit V</fullName>
    </alternativeName>
</protein>
<dbReference type="EMBL" id="X15901">
    <property type="protein sequence ID" value="CAA33967.1"/>
    <property type="molecule type" value="Genomic_DNA"/>
</dbReference>
<dbReference type="EMBL" id="AY522330">
    <property type="protein sequence ID" value="AAS46133.1"/>
    <property type="status" value="ALT_INIT"/>
    <property type="molecule type" value="Genomic_DNA"/>
</dbReference>
<dbReference type="PIR" id="JQ0245">
    <property type="entry name" value="WMRZ4"/>
</dbReference>
<dbReference type="RefSeq" id="NP_039405.1">
    <property type="nucleotide sequence ID" value="NC_001320.1"/>
</dbReference>
<dbReference type="SMR" id="P0C392"/>
<dbReference type="FunCoup" id="P0C392">
    <property type="interactions" value="74"/>
</dbReference>
<dbReference type="STRING" id="39947.P0C392"/>
<dbReference type="PaxDb" id="39947-P0C392"/>
<dbReference type="EnsemblPlants" id="transcript-petE">
    <property type="protein sequence ID" value="cds-CAA33967.1"/>
    <property type="gene ID" value="gene-petE"/>
</dbReference>
<dbReference type="GeneID" id="3131405"/>
<dbReference type="Gramene" id="transcript-petE">
    <property type="protein sequence ID" value="cds-CAA33967.1"/>
    <property type="gene ID" value="gene-petE"/>
</dbReference>
<dbReference type="KEGG" id="dosa:petE"/>
<dbReference type="KEGG" id="osa:3131405"/>
<dbReference type="InParanoid" id="P0C392"/>
<dbReference type="OrthoDB" id="35473at2759"/>
<dbReference type="Proteomes" id="UP000059680">
    <property type="component" value="Chloroplast"/>
</dbReference>
<dbReference type="GO" id="GO:0009535">
    <property type="term" value="C:chloroplast thylakoid membrane"/>
    <property type="evidence" value="ECO:0007669"/>
    <property type="project" value="UniProtKB-SubCell"/>
</dbReference>
<dbReference type="GO" id="GO:0009512">
    <property type="term" value="C:cytochrome b6f complex"/>
    <property type="evidence" value="ECO:0007669"/>
    <property type="project" value="InterPro"/>
</dbReference>
<dbReference type="GO" id="GO:0009536">
    <property type="term" value="C:plastid"/>
    <property type="evidence" value="ECO:0000305"/>
    <property type="project" value="Gramene"/>
</dbReference>
<dbReference type="GO" id="GO:0045158">
    <property type="term" value="F:electron transporter, transferring electrons within cytochrome b6/f complex of photosystem II activity"/>
    <property type="evidence" value="ECO:0007669"/>
    <property type="project" value="UniProtKB-UniRule"/>
</dbReference>
<dbReference type="GO" id="GO:0017004">
    <property type="term" value="P:cytochrome complex assembly"/>
    <property type="evidence" value="ECO:0007669"/>
    <property type="project" value="UniProtKB-UniRule"/>
</dbReference>
<dbReference type="GO" id="GO:0015979">
    <property type="term" value="P:photosynthesis"/>
    <property type="evidence" value="ECO:0007669"/>
    <property type="project" value="UniProtKB-KW"/>
</dbReference>
<dbReference type="HAMAP" id="MF_00432">
    <property type="entry name" value="Cytb6_f_PetG"/>
    <property type="match status" value="1"/>
</dbReference>
<dbReference type="InterPro" id="IPR003683">
    <property type="entry name" value="Cyt_6/f_cplx_su5"/>
</dbReference>
<dbReference type="InterPro" id="IPR036099">
    <property type="entry name" value="Cyt_6/f_cplx_su5_sf"/>
</dbReference>
<dbReference type="NCBIfam" id="NF001907">
    <property type="entry name" value="PRK00665.1"/>
    <property type="match status" value="1"/>
</dbReference>
<dbReference type="Pfam" id="PF02529">
    <property type="entry name" value="PetG"/>
    <property type="match status" value="1"/>
</dbReference>
<dbReference type="PIRSF" id="PIRSF000034">
    <property type="entry name" value="Cyt_b6-f_V"/>
    <property type="match status" value="1"/>
</dbReference>
<dbReference type="SUPFAM" id="SSF103446">
    <property type="entry name" value="PetG subunit of the cytochrome b6f complex"/>
    <property type="match status" value="1"/>
</dbReference>
<geneLocation type="chloroplast"/>
<sequence>MIEVFLFGIVLGLIPITLAGLFVTAYLQYRRGDQLDL</sequence>
<accession>P0C392</accession>
<accession>P12121</accession>
<accession>P32973</accession>
<accession>P69459</accession>
<accession>Q6QXZ8</accession>
<accession>Q6QY62</accession>
<feature type="chain" id="PRO_0000289039" description="Cytochrome b6-f complex subunit 5">
    <location>
        <begin position="1"/>
        <end position="37"/>
    </location>
</feature>
<feature type="transmembrane region" description="Helical" evidence="1">
    <location>
        <begin position="5"/>
        <end position="25"/>
    </location>
</feature>
<reference key="1">
    <citation type="journal article" date="1989" name="Mol. Gen. Genet.">
        <title>The complete sequence of the rice (Oryza sativa) chloroplast genome: intermolecular recombination between distinct tRNA genes accounts for a major plastid DNA inversion during the evolution of the cereals.</title>
        <authorList>
            <person name="Hiratsuka J."/>
            <person name="Shimada H."/>
            <person name="Whittier R."/>
            <person name="Ishibashi T."/>
            <person name="Sakamoto M."/>
            <person name="Mori M."/>
            <person name="Kondo C."/>
            <person name="Honji Y."/>
            <person name="Sun C.-R."/>
            <person name="Meng B.-Y."/>
            <person name="Li Y.-Q."/>
            <person name="Kanno A."/>
            <person name="Nishizawa Y."/>
            <person name="Hirai A."/>
            <person name="Shinozaki K."/>
            <person name="Sugiura M."/>
        </authorList>
    </citation>
    <scope>NUCLEOTIDE SEQUENCE [LARGE SCALE GENOMIC DNA]</scope>
    <source>
        <strain>cv. Nipponbare</strain>
    </source>
</reference>
<reference key="2">
    <citation type="journal article" date="2004" name="Plant Physiol.">
        <title>A comparison of rice chloroplast genomes.</title>
        <authorList>
            <person name="Tang J."/>
            <person name="Xia H."/>
            <person name="Cao M."/>
            <person name="Zhang X."/>
            <person name="Zeng W."/>
            <person name="Hu S."/>
            <person name="Tong W."/>
            <person name="Wang J."/>
            <person name="Wang J."/>
            <person name="Yu J."/>
            <person name="Yang H."/>
            <person name="Zhu L."/>
        </authorList>
    </citation>
    <scope>NUCLEOTIDE SEQUENCE [LARGE SCALE GENOMIC DNA]</scope>
    <source>
        <strain>cv. Nipponbare</strain>
    </source>
</reference>
<proteinExistence type="inferred from homology"/>
<name>PETG_ORYSJ</name>
<comment type="function">
    <text evidence="1">Component of the cytochrome b6-f complex, which mediates electron transfer between photosystem II (PSII) and photosystem I (PSI), cyclic electron flow around PSI, and state transitions. PetG is required for either the stability or assembly of the cytochrome b6-f complex.</text>
</comment>
<comment type="subunit">
    <text evidence="1">The 4 large subunits of the cytochrome b6-f complex are cytochrome b6, subunit IV (17 kDa polypeptide, PetD), cytochrome f and the Rieske protein, while the 4 small subunits are PetG, PetL, PetM and PetN. The complex functions as a dimer.</text>
</comment>
<comment type="subcellular location">
    <subcellularLocation>
        <location evidence="1">Plastid</location>
        <location evidence="1">Chloroplast thylakoid membrane</location>
        <topology evidence="1">Single-pass membrane protein</topology>
    </subcellularLocation>
</comment>
<comment type="similarity">
    <text evidence="1">Belongs to the PetG family.</text>
</comment>
<comment type="sequence caution" evidence="2">
    <conflict type="erroneous initiation">
        <sequence resource="EMBL-CDS" id="AAS46133"/>
    </conflict>
</comment>
<gene>
    <name evidence="1" type="primary">petG</name>
    <name type="synonym">petE</name>
    <name type="ordered locus">LOC_Osp1g00540</name>
    <name type="ORF">Nip082</name>
</gene>
<keyword id="KW-0150">Chloroplast</keyword>
<keyword id="KW-0249">Electron transport</keyword>
<keyword id="KW-0472">Membrane</keyword>
<keyword id="KW-0602">Photosynthesis</keyword>
<keyword id="KW-0934">Plastid</keyword>
<keyword id="KW-1185">Reference proteome</keyword>
<keyword id="KW-0793">Thylakoid</keyword>
<keyword id="KW-0812">Transmembrane</keyword>
<keyword id="KW-1133">Transmembrane helix</keyword>
<keyword id="KW-0813">Transport</keyword>
<organism>
    <name type="scientific">Oryza sativa subsp. japonica</name>
    <name type="common">Rice</name>
    <dbReference type="NCBI Taxonomy" id="39947"/>
    <lineage>
        <taxon>Eukaryota</taxon>
        <taxon>Viridiplantae</taxon>
        <taxon>Streptophyta</taxon>
        <taxon>Embryophyta</taxon>
        <taxon>Tracheophyta</taxon>
        <taxon>Spermatophyta</taxon>
        <taxon>Magnoliopsida</taxon>
        <taxon>Liliopsida</taxon>
        <taxon>Poales</taxon>
        <taxon>Poaceae</taxon>
        <taxon>BOP clade</taxon>
        <taxon>Oryzoideae</taxon>
        <taxon>Oryzeae</taxon>
        <taxon>Oryzinae</taxon>
        <taxon>Oryza</taxon>
        <taxon>Oryza sativa</taxon>
    </lineage>
</organism>
<evidence type="ECO:0000255" key="1">
    <source>
        <dbReference type="HAMAP-Rule" id="MF_00432"/>
    </source>
</evidence>
<evidence type="ECO:0000305" key="2"/>